<protein>
    <recommendedName>
        <fullName evidence="1">Sugar fermentation stimulation protein homolog</fullName>
    </recommendedName>
</protein>
<proteinExistence type="inferred from homology"/>
<comment type="similarity">
    <text evidence="1">Belongs to the SfsA family.</text>
</comment>
<evidence type="ECO:0000255" key="1">
    <source>
        <dbReference type="HAMAP-Rule" id="MF_00095"/>
    </source>
</evidence>
<dbReference type="EMBL" id="AE016795">
    <property type="protein sequence ID" value="AAO10066.1"/>
    <property type="molecule type" value="Genomic_DNA"/>
</dbReference>
<dbReference type="RefSeq" id="WP_011079570.1">
    <property type="nucleotide sequence ID" value="NC_004459.3"/>
</dbReference>
<dbReference type="SMR" id="Q8DC06"/>
<dbReference type="KEGG" id="vvu:VV1_1649"/>
<dbReference type="HOGENOM" id="CLU_052299_2_0_6"/>
<dbReference type="Proteomes" id="UP000002275">
    <property type="component" value="Chromosome 1"/>
</dbReference>
<dbReference type="GO" id="GO:0003677">
    <property type="term" value="F:DNA binding"/>
    <property type="evidence" value="ECO:0007669"/>
    <property type="project" value="InterPro"/>
</dbReference>
<dbReference type="CDD" id="cd22359">
    <property type="entry name" value="SfsA-like_bacterial"/>
    <property type="match status" value="1"/>
</dbReference>
<dbReference type="FunFam" id="2.40.50.580:FF:000001">
    <property type="entry name" value="Sugar fermentation stimulation protein A"/>
    <property type="match status" value="1"/>
</dbReference>
<dbReference type="FunFam" id="3.40.1350.60:FF:000001">
    <property type="entry name" value="Sugar fermentation stimulation protein A"/>
    <property type="match status" value="1"/>
</dbReference>
<dbReference type="Gene3D" id="2.40.50.580">
    <property type="match status" value="1"/>
</dbReference>
<dbReference type="Gene3D" id="3.40.1350.60">
    <property type="match status" value="1"/>
</dbReference>
<dbReference type="HAMAP" id="MF_00095">
    <property type="entry name" value="SfsA"/>
    <property type="match status" value="1"/>
</dbReference>
<dbReference type="InterPro" id="IPR005224">
    <property type="entry name" value="SfsA"/>
</dbReference>
<dbReference type="InterPro" id="IPR040452">
    <property type="entry name" value="SfsA_C"/>
</dbReference>
<dbReference type="InterPro" id="IPR041465">
    <property type="entry name" value="SfsA_N"/>
</dbReference>
<dbReference type="NCBIfam" id="TIGR00230">
    <property type="entry name" value="sfsA"/>
    <property type="match status" value="1"/>
</dbReference>
<dbReference type="PANTHER" id="PTHR30545">
    <property type="entry name" value="SUGAR FERMENTATION STIMULATION PROTEIN A"/>
    <property type="match status" value="1"/>
</dbReference>
<dbReference type="PANTHER" id="PTHR30545:SF2">
    <property type="entry name" value="SUGAR FERMENTATION STIMULATION PROTEIN A"/>
    <property type="match status" value="1"/>
</dbReference>
<dbReference type="Pfam" id="PF03749">
    <property type="entry name" value="SfsA"/>
    <property type="match status" value="1"/>
</dbReference>
<dbReference type="Pfam" id="PF17746">
    <property type="entry name" value="SfsA_N"/>
    <property type="match status" value="1"/>
</dbReference>
<organism>
    <name type="scientific">Vibrio vulnificus (strain CMCP6)</name>
    <dbReference type="NCBI Taxonomy" id="216895"/>
    <lineage>
        <taxon>Bacteria</taxon>
        <taxon>Pseudomonadati</taxon>
        <taxon>Pseudomonadota</taxon>
        <taxon>Gammaproteobacteria</taxon>
        <taxon>Vibrionales</taxon>
        <taxon>Vibrionaceae</taxon>
        <taxon>Vibrio</taxon>
    </lineage>
</organism>
<feature type="chain" id="PRO_0000152317" description="Sugar fermentation stimulation protein homolog">
    <location>
        <begin position="1"/>
        <end position="238"/>
    </location>
</feature>
<reference key="1">
    <citation type="submission" date="2002-12" db="EMBL/GenBank/DDBJ databases">
        <title>Complete genome sequence of Vibrio vulnificus CMCP6.</title>
        <authorList>
            <person name="Rhee J.H."/>
            <person name="Kim S.Y."/>
            <person name="Chung S.S."/>
            <person name="Kim J.J."/>
            <person name="Moon Y.H."/>
            <person name="Jeong H."/>
            <person name="Choy H.E."/>
        </authorList>
    </citation>
    <scope>NUCLEOTIDE SEQUENCE [LARGE SCALE GENOMIC DNA]</scope>
    <source>
        <strain>CMCP6</strain>
    </source>
</reference>
<accession>Q8DC06</accession>
<gene>
    <name evidence="1" type="primary">sfsA</name>
    <name type="ordered locus">VV1_1649</name>
</gene>
<sequence>MHFEPALDCALLQKRYKRFLADVTYQSGDTGTIHCANTGAMTGCATPGDKVWYSTSNNTKRKYPHSWEITETEQGHLICVNTIRANQLAVEAIEQGWIKELSGYERLQTEVKYGHENSRIDILLSASDRPACYIEVKSVTLLDDTEPGQGFFPDAVTTRGQKHLRELTEMAQNGSRAILLFAVLHSGIEKVAAALHIDAKYSQLLKQAQKAGVEVLCYKAEISNTEIKLNSAIAFNNS</sequence>
<name>SFSA_VIBVU</name>